<evidence type="ECO:0000250" key="1">
    <source>
        <dbReference type="UniProtKB" id="Q6NZY4"/>
    </source>
</evidence>
<evidence type="ECO:0000255" key="2"/>
<evidence type="ECO:0000255" key="3">
    <source>
        <dbReference type="PROSITE-ProRule" id="PRU00047"/>
    </source>
</evidence>
<evidence type="ECO:0000256" key="4">
    <source>
        <dbReference type="SAM" id="MobiDB-lite"/>
    </source>
</evidence>
<evidence type="ECO:0000305" key="5"/>
<dbReference type="EMBL" id="AJ851719">
    <property type="protein sequence ID" value="CAH65353.1"/>
    <property type="molecule type" value="mRNA"/>
</dbReference>
<dbReference type="SMR" id="Q5F3D1"/>
<dbReference type="FunCoup" id="Q5F3D1">
    <property type="interactions" value="2037"/>
</dbReference>
<dbReference type="STRING" id="9031.ENSGALP00000007133"/>
<dbReference type="PaxDb" id="9031-ENSGALP00000007133"/>
<dbReference type="VEuPathDB" id="HostDB:geneid_416862"/>
<dbReference type="eggNOG" id="KOG2673">
    <property type="taxonomic scope" value="Eukaryota"/>
</dbReference>
<dbReference type="InParanoid" id="Q5F3D1"/>
<dbReference type="OrthoDB" id="8026949at2759"/>
<dbReference type="PhylomeDB" id="Q5F3D1"/>
<dbReference type="Proteomes" id="UP000000539">
    <property type="component" value="Unassembled WGS sequence"/>
</dbReference>
<dbReference type="GO" id="GO:0071013">
    <property type="term" value="C:catalytic step 2 spliceosome"/>
    <property type="evidence" value="ECO:0000318"/>
    <property type="project" value="GO_Central"/>
</dbReference>
<dbReference type="GO" id="GO:0005654">
    <property type="term" value="C:nucleoplasm"/>
    <property type="evidence" value="ECO:0000250"/>
    <property type="project" value="UniProtKB"/>
</dbReference>
<dbReference type="GO" id="GO:0003723">
    <property type="term" value="F:RNA binding"/>
    <property type="evidence" value="ECO:0000318"/>
    <property type="project" value="GO_Central"/>
</dbReference>
<dbReference type="GO" id="GO:0008270">
    <property type="term" value="F:zinc ion binding"/>
    <property type="evidence" value="ECO:0007669"/>
    <property type="project" value="UniProtKB-KW"/>
</dbReference>
<dbReference type="GO" id="GO:0031124">
    <property type="term" value="P:mRNA 3'-end processing"/>
    <property type="evidence" value="ECO:0000250"/>
    <property type="project" value="UniProtKB"/>
</dbReference>
<dbReference type="GO" id="GO:0006396">
    <property type="term" value="P:RNA processing"/>
    <property type="evidence" value="ECO:0000318"/>
    <property type="project" value="GO_Central"/>
</dbReference>
<dbReference type="Gene3D" id="4.10.60.10">
    <property type="entry name" value="Zinc finger, CCHC-type"/>
    <property type="match status" value="1"/>
</dbReference>
<dbReference type="InterPro" id="IPR052115">
    <property type="entry name" value="NEXT_complex_subunit_ZCCHC8"/>
</dbReference>
<dbReference type="InterPro" id="IPR006568">
    <property type="entry name" value="PSP_pro-rich"/>
</dbReference>
<dbReference type="InterPro" id="IPR001878">
    <property type="entry name" value="Znf_CCHC"/>
</dbReference>
<dbReference type="InterPro" id="IPR036875">
    <property type="entry name" value="Znf_CCHC_sf"/>
</dbReference>
<dbReference type="PANTHER" id="PTHR13316:SF0">
    <property type="entry name" value="ZINC FINGER CCHC DOMAIN-CONTAINING PROTEIN 8"/>
    <property type="match status" value="1"/>
</dbReference>
<dbReference type="PANTHER" id="PTHR13316">
    <property type="entry name" value="ZINC FINGER, CCHC DOMAIN CONTAINING 8"/>
    <property type="match status" value="1"/>
</dbReference>
<dbReference type="Pfam" id="PF04046">
    <property type="entry name" value="PSP"/>
    <property type="match status" value="1"/>
</dbReference>
<dbReference type="Pfam" id="PF00098">
    <property type="entry name" value="zf-CCHC"/>
    <property type="match status" value="1"/>
</dbReference>
<dbReference type="SMART" id="SM00581">
    <property type="entry name" value="PSP"/>
    <property type="match status" value="1"/>
</dbReference>
<dbReference type="SMART" id="SM00343">
    <property type="entry name" value="ZnF_C2HC"/>
    <property type="match status" value="1"/>
</dbReference>
<dbReference type="SUPFAM" id="SSF57756">
    <property type="entry name" value="Retrovirus zinc finger-like domains"/>
    <property type="match status" value="1"/>
</dbReference>
<dbReference type="PROSITE" id="PS50158">
    <property type="entry name" value="ZF_CCHC"/>
    <property type="match status" value="1"/>
</dbReference>
<keyword id="KW-0175">Coiled coil</keyword>
<keyword id="KW-0479">Metal-binding</keyword>
<keyword id="KW-0539">Nucleus</keyword>
<keyword id="KW-1185">Reference proteome</keyword>
<keyword id="KW-0862">Zinc</keyword>
<keyword id="KW-0863">Zinc-finger</keyword>
<gene>
    <name type="primary">ZCCHC8</name>
    <name type="ORF">RCJMB04_21c10</name>
</gene>
<accession>Q5F3D1</accession>
<name>ZCHC8_CHICK</name>
<protein>
    <recommendedName>
        <fullName>Zinc finger CCHC domain-containing protein 8</fullName>
    </recommendedName>
    <alternativeName>
        <fullName>TRAMP-like complex RNA-binding factor ZCCHC8</fullName>
    </alternativeName>
</protein>
<comment type="function">
    <text evidence="1">Scaffolding subunit of the trimeric nuclear exosome targeting (NEXT) complex that is involved in the surveillance and turnover of aberrant transcripts and non-coding RNAs. NEXT functions as an RNA exosome cofactor that directs a subset of non-coding short-lived RNAs for exosomal degradation. May be involved in pre-mRNA splicing. It is required for 3'-end maturation of telomerase RNA component (TERC), TERC 3'-end targeting to the nuclear RNA exosome, and for telomerase function.</text>
</comment>
<comment type="subcellular location">
    <subcellularLocation>
        <location evidence="1">Nucleus</location>
        <location evidence="1">Nucleoplasm</location>
    </subcellularLocation>
    <text evidence="1">Excluded from nucleolus.</text>
</comment>
<comment type="similarity">
    <text evidence="5">Belongs to the ZCCHC8 family.</text>
</comment>
<organism>
    <name type="scientific">Gallus gallus</name>
    <name type="common">Chicken</name>
    <dbReference type="NCBI Taxonomy" id="9031"/>
    <lineage>
        <taxon>Eukaryota</taxon>
        <taxon>Metazoa</taxon>
        <taxon>Chordata</taxon>
        <taxon>Craniata</taxon>
        <taxon>Vertebrata</taxon>
        <taxon>Euteleostomi</taxon>
        <taxon>Archelosauria</taxon>
        <taxon>Archosauria</taxon>
        <taxon>Dinosauria</taxon>
        <taxon>Saurischia</taxon>
        <taxon>Theropoda</taxon>
        <taxon>Coelurosauria</taxon>
        <taxon>Aves</taxon>
        <taxon>Neognathae</taxon>
        <taxon>Galloanserae</taxon>
        <taxon>Galliformes</taxon>
        <taxon>Phasianidae</taxon>
        <taxon>Phasianinae</taxon>
        <taxon>Gallus</taxon>
    </lineage>
</organism>
<proteinExistence type="evidence at transcript level"/>
<reference key="1">
    <citation type="journal article" date="2005" name="Genome Biol.">
        <title>Full-length cDNAs from chicken bursal lymphocytes to facilitate gene function analysis.</title>
        <authorList>
            <person name="Caldwell R.B."/>
            <person name="Kierzek A.M."/>
            <person name="Arakawa H."/>
            <person name="Bezzubov Y."/>
            <person name="Zaim J."/>
            <person name="Fiedler P."/>
            <person name="Kutter S."/>
            <person name="Blagodatski A."/>
            <person name="Kostovska D."/>
            <person name="Koter M."/>
            <person name="Plachy J."/>
            <person name="Carninci P."/>
            <person name="Hayashizaki Y."/>
            <person name="Buerstedde J.-M."/>
        </authorList>
    </citation>
    <scope>NUCLEOTIDE SEQUENCE [LARGE SCALE MRNA]</scope>
    <source>
        <strain>CB</strain>
        <tissue>Bursa of Fabricius</tissue>
    </source>
</reference>
<sequence>MVISKQYHQEIEDFVFNLVHKYEDQQRDEQEKTHFSLKPQPSSVVLEEDYKTASSNSVKKIKEAFSVVGSVLYFTNFCLDKLGQPILNENPQLTEGWEIPKYQQVFSQILSLDGQEIQVKPKRPKSHCFNCGSEEHQIKDCPKPRNAARISEKRKEFMEAYGEASNQNFQQRYHAEEVEERFGKFKPGVISGELQDALGVTAKSLPPFIYRMRQLGYPPGWLKEAEMEHSGLALYDGKDDNETEDEGYLQPKHVTYDVSKLINYPGFNISTPSGIPDEWQIFGSIPMQPSQQKDVFAHYLSNFHAPSSKSSNKRTAPQPSSHHSKRPKDDLEVAVADMDIDSDVEVSQRSQTTNSFQFQPPLPPGPPVISTPPPLPQGTPPLTPRSLTPTQPSTPTHPPLPNTVSSLNPSSDVSQPKIVDSTMDEDTLTLEELEEQQRLIWAALEQAESTNSDSDIPVDTPLTGNSVTSSPSRNEVDVVAEVRSDKMVTLETKFSSISEQVPENEHSLTSPNPDNSSLNLKEIPDNSDSEGLLDNTVPAPNHEVNDGESIVDNKVVTSTESSAKNSNPVPDMSKFAVGIAPFEFENMTESTGTYLRIRSVLKNSPRNQQKKKT</sequence>
<feature type="chain" id="PRO_0000150963" description="Zinc finger CCHC domain-containing protein 8">
    <location>
        <begin position="1"/>
        <end position="613"/>
    </location>
</feature>
<feature type="zinc finger region" description="CCHC-type" evidence="3">
    <location>
        <begin position="126"/>
        <end position="143"/>
    </location>
</feature>
<feature type="region of interest" description="Disordered" evidence="4">
    <location>
        <begin position="304"/>
        <end position="330"/>
    </location>
</feature>
<feature type="region of interest" description="Disordered" evidence="4">
    <location>
        <begin position="344"/>
        <end position="417"/>
    </location>
</feature>
<feature type="region of interest" description="Disordered" evidence="4">
    <location>
        <begin position="448"/>
        <end position="473"/>
    </location>
</feature>
<feature type="region of interest" description="Disordered" evidence="4">
    <location>
        <begin position="494"/>
        <end position="546"/>
    </location>
</feature>
<feature type="coiled-coil region" evidence="2">
    <location>
        <begin position="431"/>
        <end position="451"/>
    </location>
</feature>
<feature type="compositionally biased region" description="Polar residues" evidence="4">
    <location>
        <begin position="304"/>
        <end position="321"/>
    </location>
</feature>
<feature type="compositionally biased region" description="Polar residues" evidence="4">
    <location>
        <begin position="345"/>
        <end position="358"/>
    </location>
</feature>
<feature type="compositionally biased region" description="Pro residues" evidence="4">
    <location>
        <begin position="360"/>
        <end position="383"/>
    </location>
</feature>
<feature type="compositionally biased region" description="Low complexity" evidence="4">
    <location>
        <begin position="384"/>
        <end position="394"/>
    </location>
</feature>
<feature type="compositionally biased region" description="Polar residues" evidence="4">
    <location>
        <begin position="404"/>
        <end position="414"/>
    </location>
</feature>
<feature type="compositionally biased region" description="Polar residues" evidence="4">
    <location>
        <begin position="462"/>
        <end position="473"/>
    </location>
</feature>
<feature type="compositionally biased region" description="Polar residues" evidence="4">
    <location>
        <begin position="494"/>
        <end position="519"/>
    </location>
</feature>